<accession>Q9JW77</accession>
<accession>A1IPW5</accession>
<dbReference type="EMBL" id="AL157959">
    <property type="protein sequence ID" value="CAM07786.1"/>
    <property type="molecule type" value="Genomic_DNA"/>
</dbReference>
<dbReference type="PIR" id="A81969">
    <property type="entry name" value="A81969"/>
</dbReference>
<dbReference type="RefSeq" id="WP_002214806.1">
    <property type="nucleotide sequence ID" value="NC_003116.1"/>
</dbReference>
<dbReference type="SMR" id="Q9JW77"/>
<dbReference type="EnsemblBacteria" id="CAM07786">
    <property type="protein sequence ID" value="CAM07786"/>
    <property type="gene ID" value="NMA0508"/>
</dbReference>
<dbReference type="KEGG" id="nma:NMA0508"/>
<dbReference type="HOGENOM" id="CLU_023853_0_1_4"/>
<dbReference type="Proteomes" id="UP000000626">
    <property type="component" value="Chromosome"/>
</dbReference>
<dbReference type="GO" id="GO:0005694">
    <property type="term" value="C:chromosome"/>
    <property type="evidence" value="ECO:0007669"/>
    <property type="project" value="TreeGrafter"/>
</dbReference>
<dbReference type="GO" id="GO:0003677">
    <property type="term" value="F:DNA binding"/>
    <property type="evidence" value="ECO:0007669"/>
    <property type="project" value="UniProtKB-KW"/>
</dbReference>
<dbReference type="GO" id="GO:0007059">
    <property type="term" value="P:chromosome segregation"/>
    <property type="evidence" value="ECO:0007669"/>
    <property type="project" value="UniProtKB-KW"/>
</dbReference>
<dbReference type="GO" id="GO:0045881">
    <property type="term" value="P:positive regulation of sporulation resulting in formation of a cellular spore"/>
    <property type="evidence" value="ECO:0007669"/>
    <property type="project" value="TreeGrafter"/>
</dbReference>
<dbReference type="CDD" id="cd16393">
    <property type="entry name" value="SPO0J_N"/>
    <property type="match status" value="1"/>
</dbReference>
<dbReference type="FunFam" id="1.10.10.2830:FF:000001">
    <property type="entry name" value="Chromosome partitioning protein ParB"/>
    <property type="match status" value="1"/>
</dbReference>
<dbReference type="FunFam" id="3.90.1530.30:FF:000001">
    <property type="entry name" value="Chromosome partitioning protein ParB"/>
    <property type="match status" value="1"/>
</dbReference>
<dbReference type="Gene3D" id="1.10.10.2830">
    <property type="match status" value="1"/>
</dbReference>
<dbReference type="Gene3D" id="3.90.1530.30">
    <property type="match status" value="1"/>
</dbReference>
<dbReference type="InterPro" id="IPR050336">
    <property type="entry name" value="Chromosome_partition/occlusion"/>
</dbReference>
<dbReference type="InterPro" id="IPR041468">
    <property type="entry name" value="HTH_ParB/Spo0J"/>
</dbReference>
<dbReference type="InterPro" id="IPR004437">
    <property type="entry name" value="ParB/RepB/Spo0J"/>
</dbReference>
<dbReference type="InterPro" id="IPR003115">
    <property type="entry name" value="ParB/Sulfiredoxin_dom"/>
</dbReference>
<dbReference type="InterPro" id="IPR036086">
    <property type="entry name" value="ParB/Sulfiredoxin_sf"/>
</dbReference>
<dbReference type="InterPro" id="IPR057240">
    <property type="entry name" value="ParB_dimer_C"/>
</dbReference>
<dbReference type="NCBIfam" id="TIGR00180">
    <property type="entry name" value="parB_part"/>
    <property type="match status" value="1"/>
</dbReference>
<dbReference type="PANTHER" id="PTHR33375">
    <property type="entry name" value="CHROMOSOME-PARTITIONING PROTEIN PARB-RELATED"/>
    <property type="match status" value="1"/>
</dbReference>
<dbReference type="PANTHER" id="PTHR33375:SF1">
    <property type="entry name" value="CHROMOSOME-PARTITIONING PROTEIN PARB-RELATED"/>
    <property type="match status" value="1"/>
</dbReference>
<dbReference type="Pfam" id="PF17762">
    <property type="entry name" value="HTH_ParB"/>
    <property type="match status" value="1"/>
</dbReference>
<dbReference type="Pfam" id="PF23552">
    <property type="entry name" value="ParB_dimer"/>
    <property type="match status" value="1"/>
</dbReference>
<dbReference type="Pfam" id="PF02195">
    <property type="entry name" value="ParBc"/>
    <property type="match status" value="1"/>
</dbReference>
<dbReference type="SMART" id="SM00470">
    <property type="entry name" value="ParB"/>
    <property type="match status" value="1"/>
</dbReference>
<dbReference type="SUPFAM" id="SSF109709">
    <property type="entry name" value="KorB DNA-binding domain-like"/>
    <property type="match status" value="1"/>
</dbReference>
<dbReference type="SUPFAM" id="SSF110849">
    <property type="entry name" value="ParB/Sulfiredoxin"/>
    <property type="match status" value="1"/>
</dbReference>
<proteinExistence type="inferred from homology"/>
<organism>
    <name type="scientific">Neisseria meningitidis serogroup A / serotype 4A (strain DSM 15465 / Z2491)</name>
    <dbReference type="NCBI Taxonomy" id="122587"/>
    <lineage>
        <taxon>Bacteria</taxon>
        <taxon>Pseudomonadati</taxon>
        <taxon>Pseudomonadota</taxon>
        <taxon>Betaproteobacteria</taxon>
        <taxon>Neisseriales</taxon>
        <taxon>Neisseriaceae</taxon>
        <taxon>Neisseria</taxon>
    </lineage>
</organism>
<feature type="chain" id="PRO_0000178687" description="Probable chromosome-partitioning protein ParB">
    <location>
        <begin position="1"/>
        <end position="286"/>
    </location>
</feature>
<evidence type="ECO:0000250" key="1"/>
<evidence type="ECO:0000305" key="2"/>
<gene>
    <name type="primary">parB</name>
    <name type="ordered locus">NMA0508</name>
</gene>
<keyword id="KW-0159">Chromosome partition</keyword>
<keyword id="KW-0238">DNA-binding</keyword>
<comment type="function">
    <text evidence="1">Involved in chromosome partition. Localize to both poles of the predivisional cell following completion of DNA replication. Binds to the DNA origin of replication (By similarity).</text>
</comment>
<comment type="similarity">
    <text evidence="2">Belongs to the ParB family.</text>
</comment>
<name>PARB_NEIMA</name>
<reference key="1">
    <citation type="journal article" date="2000" name="Nature">
        <title>Complete DNA sequence of a serogroup A strain of Neisseria meningitidis Z2491.</title>
        <authorList>
            <person name="Parkhill J."/>
            <person name="Achtman M."/>
            <person name="James K.D."/>
            <person name="Bentley S.D."/>
            <person name="Churcher C.M."/>
            <person name="Klee S.R."/>
            <person name="Morelli G."/>
            <person name="Basham D."/>
            <person name="Brown D."/>
            <person name="Chillingworth T."/>
            <person name="Davies R.M."/>
            <person name="Davis P."/>
            <person name="Devlin K."/>
            <person name="Feltwell T."/>
            <person name="Hamlin N."/>
            <person name="Holroyd S."/>
            <person name="Jagels K."/>
            <person name="Leather S."/>
            <person name="Moule S."/>
            <person name="Mungall K.L."/>
            <person name="Quail M.A."/>
            <person name="Rajandream M.A."/>
            <person name="Rutherford K.M."/>
            <person name="Simmonds M."/>
            <person name="Skelton J."/>
            <person name="Whitehead S."/>
            <person name="Spratt B.G."/>
            <person name="Barrell B.G."/>
        </authorList>
    </citation>
    <scope>NUCLEOTIDE SEQUENCE [LARGE SCALE GENOMIC DNA]</scope>
    <source>
        <strain>DSM 15465 / Z2491</strain>
    </source>
</reference>
<sequence length="286" mass="31586">MAKVKGGLGRGLDSLLANGADNSSGDRLTTVAVKDIRPGRYQARVQIDDEALQELADSIKAQGVIQPVIVREHGLSRYELIAGERRWRAAQIAGLTEIPAVIKTISDETALAMGLIENLQRENLNPIEEAQGLKRLADEFGLTHETIAQAVGKSRSAISNSLRLLSLPEPVQEMLYQRRLEMGHARALLTLPVVEQLELAQKAVKNGWSVREVERRSQAALQNKRPEPKKTAAADIGRLNDLLTEKLGVNAEIKTANHKKGKIILHFDTPETFDHILKQLGIDYRP</sequence>
<protein>
    <recommendedName>
        <fullName>Probable chromosome-partitioning protein ParB</fullName>
    </recommendedName>
</protein>